<organism>
    <name type="scientific">Campylobacter jejuni (strain RM1221)</name>
    <dbReference type="NCBI Taxonomy" id="195099"/>
    <lineage>
        <taxon>Bacteria</taxon>
        <taxon>Pseudomonadati</taxon>
        <taxon>Campylobacterota</taxon>
        <taxon>Epsilonproteobacteria</taxon>
        <taxon>Campylobacterales</taxon>
        <taxon>Campylobacteraceae</taxon>
        <taxon>Campylobacter</taxon>
    </lineage>
</organism>
<reference key="1">
    <citation type="journal article" date="2005" name="PLoS Biol.">
        <title>Major structural differences and novel potential virulence mechanisms from the genomes of multiple Campylobacter species.</title>
        <authorList>
            <person name="Fouts D.E."/>
            <person name="Mongodin E.F."/>
            <person name="Mandrell R.E."/>
            <person name="Miller W.G."/>
            <person name="Rasko D.A."/>
            <person name="Ravel J."/>
            <person name="Brinkac L.M."/>
            <person name="DeBoy R.T."/>
            <person name="Parker C.T."/>
            <person name="Daugherty S.C."/>
            <person name="Dodson R.J."/>
            <person name="Durkin A.S."/>
            <person name="Madupu R."/>
            <person name="Sullivan S.A."/>
            <person name="Shetty J.U."/>
            <person name="Ayodeji M.A."/>
            <person name="Shvartsbeyn A."/>
            <person name="Schatz M.C."/>
            <person name="Badger J.H."/>
            <person name="Fraser C.M."/>
            <person name="Nelson K.E."/>
        </authorList>
    </citation>
    <scope>NUCLEOTIDE SEQUENCE [LARGE SCALE GENOMIC DNA]</scope>
    <source>
        <strain>RM1221</strain>
    </source>
</reference>
<name>NUOH_CAMJR</name>
<sequence length="332" mass="36559">MSDFAFFALEALIKCIIIIAIFASLAGLATYAERKVLAYFQRRIGPDMVGPFGLIQLVADMIKLFTKEDIIPSNSQKFIFAIAPLISAICAFVSLAAIPMLPEFTLFGKVIQPIVADINVALLFVIGTSGLCFYAVFLGGLASNNKWSILGAARGLVAIISYESVGALALIAIVMLVGSFSLVDINNYQSDGFFSWLIFKQPLAFVLFIIALFIETNRTPLCLTENDAEIVAGYGTEYSGLRWGMFFIGEYASMIAGAILVTLLFLGGFNSFWIIPGWIMMIVKSSFIFFWYFWARAAFPQLRPDQVMKMCYLILIPLAVLNLLITALAVLL</sequence>
<keyword id="KW-0997">Cell inner membrane</keyword>
<keyword id="KW-1003">Cell membrane</keyword>
<keyword id="KW-0472">Membrane</keyword>
<keyword id="KW-0520">NAD</keyword>
<keyword id="KW-0874">Quinone</keyword>
<keyword id="KW-1278">Translocase</keyword>
<keyword id="KW-0812">Transmembrane</keyword>
<keyword id="KW-1133">Transmembrane helix</keyword>
<keyword id="KW-0830">Ubiquinone</keyword>
<proteinExistence type="inferred from homology"/>
<dbReference type="EC" id="7.1.1.-" evidence="1"/>
<dbReference type="EMBL" id="CP000025">
    <property type="protein sequence ID" value="AAW36168.1"/>
    <property type="molecule type" value="Genomic_DNA"/>
</dbReference>
<dbReference type="RefSeq" id="WP_002867591.1">
    <property type="nucleotide sequence ID" value="NC_003912.7"/>
</dbReference>
<dbReference type="SMR" id="Q5HSL9"/>
<dbReference type="KEGG" id="cjr:CJE1743"/>
<dbReference type="HOGENOM" id="CLU_015134_0_1_7"/>
<dbReference type="GO" id="GO:0005886">
    <property type="term" value="C:plasma membrane"/>
    <property type="evidence" value="ECO:0007669"/>
    <property type="project" value="UniProtKB-SubCell"/>
</dbReference>
<dbReference type="GO" id="GO:0003954">
    <property type="term" value="F:NADH dehydrogenase activity"/>
    <property type="evidence" value="ECO:0007669"/>
    <property type="project" value="TreeGrafter"/>
</dbReference>
<dbReference type="GO" id="GO:0016655">
    <property type="term" value="F:oxidoreductase activity, acting on NAD(P)H, quinone or similar compound as acceptor"/>
    <property type="evidence" value="ECO:0007669"/>
    <property type="project" value="UniProtKB-UniRule"/>
</dbReference>
<dbReference type="GO" id="GO:0048038">
    <property type="term" value="F:quinone binding"/>
    <property type="evidence" value="ECO:0007669"/>
    <property type="project" value="UniProtKB-KW"/>
</dbReference>
<dbReference type="GO" id="GO:0009060">
    <property type="term" value="P:aerobic respiration"/>
    <property type="evidence" value="ECO:0007669"/>
    <property type="project" value="TreeGrafter"/>
</dbReference>
<dbReference type="HAMAP" id="MF_01350">
    <property type="entry name" value="NDH1_NuoH"/>
    <property type="match status" value="1"/>
</dbReference>
<dbReference type="InterPro" id="IPR001694">
    <property type="entry name" value="NADH_UbQ_OxRdtase_su1/FPO"/>
</dbReference>
<dbReference type="InterPro" id="IPR018086">
    <property type="entry name" value="NADH_UbQ_OxRdtase_su1_CS"/>
</dbReference>
<dbReference type="NCBIfam" id="NF004741">
    <property type="entry name" value="PRK06076.1-2"/>
    <property type="match status" value="1"/>
</dbReference>
<dbReference type="PANTHER" id="PTHR11432">
    <property type="entry name" value="NADH DEHYDROGENASE SUBUNIT 1"/>
    <property type="match status" value="1"/>
</dbReference>
<dbReference type="PANTHER" id="PTHR11432:SF3">
    <property type="entry name" value="NADH-UBIQUINONE OXIDOREDUCTASE CHAIN 1"/>
    <property type="match status" value="1"/>
</dbReference>
<dbReference type="Pfam" id="PF00146">
    <property type="entry name" value="NADHdh"/>
    <property type="match status" value="1"/>
</dbReference>
<dbReference type="PROSITE" id="PS00667">
    <property type="entry name" value="COMPLEX1_ND1_1"/>
    <property type="match status" value="1"/>
</dbReference>
<evidence type="ECO:0000255" key="1">
    <source>
        <dbReference type="HAMAP-Rule" id="MF_01350"/>
    </source>
</evidence>
<protein>
    <recommendedName>
        <fullName evidence="1">NADH-quinone oxidoreductase subunit H</fullName>
        <ecNumber evidence="1">7.1.1.-</ecNumber>
    </recommendedName>
    <alternativeName>
        <fullName evidence="1">NADH dehydrogenase I subunit H</fullName>
    </alternativeName>
    <alternativeName>
        <fullName evidence="1">NDH-1 subunit H</fullName>
    </alternativeName>
</protein>
<accession>Q5HSL9</accession>
<comment type="function">
    <text evidence="1">NDH-1 shuttles electrons from NADH, via FMN and iron-sulfur (Fe-S) centers, to quinones in the respiratory chain. The immediate electron acceptor for the enzyme in this species is believed to be ubiquinone. Couples the redox reaction to proton translocation (for every two electrons transferred, four hydrogen ions are translocated across the cytoplasmic membrane), and thus conserves the redox energy in a proton gradient. This subunit may bind ubiquinone.</text>
</comment>
<comment type="catalytic activity">
    <reaction evidence="1">
        <text>a quinone + NADH + 5 H(+)(in) = a quinol + NAD(+) + 4 H(+)(out)</text>
        <dbReference type="Rhea" id="RHEA:57888"/>
        <dbReference type="ChEBI" id="CHEBI:15378"/>
        <dbReference type="ChEBI" id="CHEBI:24646"/>
        <dbReference type="ChEBI" id="CHEBI:57540"/>
        <dbReference type="ChEBI" id="CHEBI:57945"/>
        <dbReference type="ChEBI" id="CHEBI:132124"/>
    </reaction>
</comment>
<comment type="subunit">
    <text evidence="1">NDH-1 is composed of 14 different subunits. Subunits NuoA, H, J, K, L, M, N constitute the membrane sector of the complex.</text>
</comment>
<comment type="subcellular location">
    <subcellularLocation>
        <location evidence="1">Cell inner membrane</location>
        <topology evidence="1">Multi-pass membrane protein</topology>
    </subcellularLocation>
</comment>
<comment type="similarity">
    <text evidence="1">Belongs to the complex I subunit 1 family.</text>
</comment>
<gene>
    <name evidence="1" type="primary">nuoH</name>
    <name type="ordered locus">CJE1743</name>
</gene>
<feature type="chain" id="PRO_0000240062" description="NADH-quinone oxidoreductase subunit H">
    <location>
        <begin position="1"/>
        <end position="332"/>
    </location>
</feature>
<feature type="transmembrane region" description="Helical" evidence="1">
    <location>
        <begin position="4"/>
        <end position="24"/>
    </location>
</feature>
<feature type="transmembrane region" description="Helical" evidence="1">
    <location>
        <begin position="44"/>
        <end position="64"/>
    </location>
</feature>
<feature type="transmembrane region" description="Helical" evidence="1">
    <location>
        <begin position="78"/>
        <end position="98"/>
    </location>
</feature>
<feature type="transmembrane region" description="Helical" evidence="1">
    <location>
        <begin position="120"/>
        <end position="140"/>
    </location>
</feature>
<feature type="transmembrane region" description="Helical" evidence="1">
    <location>
        <begin position="165"/>
        <end position="185"/>
    </location>
</feature>
<feature type="transmembrane region" description="Helical" evidence="1">
    <location>
        <begin position="194"/>
        <end position="214"/>
    </location>
</feature>
<feature type="transmembrane region" description="Helical" evidence="1">
    <location>
        <begin position="255"/>
        <end position="275"/>
    </location>
</feature>
<feature type="transmembrane region" description="Helical" evidence="1">
    <location>
        <begin position="279"/>
        <end position="299"/>
    </location>
</feature>
<feature type="transmembrane region" description="Helical" evidence="1">
    <location>
        <begin position="312"/>
        <end position="332"/>
    </location>
</feature>